<keyword id="KW-1048">Host nucleus</keyword>
<keyword id="KW-0426">Late protein</keyword>
<keyword id="KW-0479">Metal-binding</keyword>
<keyword id="KW-0946">Virion</keyword>
<keyword id="KW-0920">Virion tegument</keyword>
<keyword id="KW-0862">Zinc</keyword>
<keyword id="KW-0863">Zinc-finger</keyword>
<feature type="chain" id="PRO_0000406942" description="Virion protein US10">
    <location>
        <begin position="1"/>
        <end position="303"/>
    </location>
</feature>
<feature type="zinc finger region" evidence="2">
    <location>
        <begin position="262"/>
        <end position="274"/>
    </location>
</feature>
<feature type="region of interest" description="Disordered" evidence="3">
    <location>
        <begin position="20"/>
        <end position="97"/>
    </location>
</feature>
<feature type="region of interest" description="Disordered" evidence="3">
    <location>
        <begin position="134"/>
        <end position="160"/>
    </location>
</feature>
<feature type="compositionally biased region" description="Basic and acidic residues" evidence="3">
    <location>
        <begin position="46"/>
        <end position="62"/>
    </location>
</feature>
<name>US10_HHV1F</name>
<comment type="subcellular location">
    <subcellularLocation>
        <location>Virion tegument</location>
    </subcellularLocation>
    <subcellularLocation>
        <location evidence="1">Host nucleus matrix</location>
    </subcellularLocation>
</comment>
<comment type="induction">
    <text>Expressed late in the infection cycle.</text>
</comment>
<comment type="PTM">
    <text evidence="1">Phosphorylated.</text>
</comment>
<comment type="similarity">
    <text evidence="4">Belongs to the herpesviridae US10 family.</text>
</comment>
<organismHost>
    <name type="scientific">Homo sapiens</name>
    <name type="common">Human</name>
    <dbReference type="NCBI Taxonomy" id="9606"/>
</organismHost>
<gene>
    <name type="primary">US10</name>
</gene>
<reference key="1">
    <citation type="journal article" date="2010" name="J. Virol.">
        <title>Sequence variability in clinical and laboratory isolates of herpes simplex virus 1 reveals new mutations.</title>
        <authorList>
            <person name="Szpara M.L."/>
            <person name="Parsons L."/>
            <person name="Enquist L.W."/>
        </authorList>
    </citation>
    <scope>NUCLEOTIDE SEQUENCE [LARGE SCALE GENOMIC DNA]</scope>
</reference>
<reference key="2">
    <citation type="journal article" date="2008" name="J. Virol.">
        <title>Comprehensive characterization of extracellular herpes simplex virus type 1 virions.</title>
        <authorList>
            <person name="Loret S."/>
            <person name="Guay G."/>
            <person name="Lippe R."/>
        </authorList>
    </citation>
    <scope>TEGUMENT</scope>
</reference>
<proteinExistence type="evidence at transcript level"/>
<organism>
    <name type="scientific">Human herpesvirus 1 (strain F)</name>
    <name type="common">HHV-1</name>
    <name type="synonym">Human herpes simplex virus 1</name>
    <dbReference type="NCBI Taxonomy" id="10304"/>
    <lineage>
        <taxon>Viruses</taxon>
        <taxon>Duplodnaviria</taxon>
        <taxon>Heunggongvirae</taxon>
        <taxon>Peploviricota</taxon>
        <taxon>Herviviricetes</taxon>
        <taxon>Herpesvirales</taxon>
        <taxon>Orthoherpesviridae</taxon>
        <taxon>Alphaherpesvirinae</taxon>
        <taxon>Simplexvirus</taxon>
        <taxon>Simplexvirus humanalpha1</taxon>
        <taxon>Human herpesvirus 1</taxon>
    </lineage>
</organism>
<accession>D3YPD5</accession>
<sequence>MIKRRGNVEIRVYYESVRTLRSRSHLKPSDRQQSPGHRVFPGSPGFRDHPENLGNPEYRELPETPGYRVTPGIHDNPGSPGLPGSPGPHAPPANHVRLAGLYSPGKYAPLASPDPFSPQDGAYARARVGLHTAVRVPPTGSPTHTHLRHDPGDEPTSDDSGLYPLDARALAHLVMLPADHRAFFRTVVEVSRMCAANVRDPPPPATGAMLGRHARLVHTQWLRANQETSPLWPWRTAAINFITTMAPRVQTHRHMHDLLMACAFWCCLTHASTCSYAGLYSTHCLHLFGAFGCGDPALTPPLC</sequence>
<protein>
    <recommendedName>
        <fullName>Virion protein US10</fullName>
    </recommendedName>
</protein>
<dbReference type="EMBL" id="GU734771">
    <property type="protein sequence ID" value="ADD60018.1"/>
    <property type="molecule type" value="Genomic_DNA"/>
</dbReference>
<dbReference type="Proteomes" id="UP000121444">
    <property type="component" value="Segment"/>
</dbReference>
<dbReference type="GO" id="GO:0044204">
    <property type="term" value="C:host cell nuclear matrix"/>
    <property type="evidence" value="ECO:0007669"/>
    <property type="project" value="UniProtKB-SubCell"/>
</dbReference>
<dbReference type="GO" id="GO:0019033">
    <property type="term" value="C:viral tegument"/>
    <property type="evidence" value="ECO:0007669"/>
    <property type="project" value="UniProtKB-SubCell"/>
</dbReference>
<dbReference type="GO" id="GO:0008270">
    <property type="term" value="F:zinc ion binding"/>
    <property type="evidence" value="ECO:0007669"/>
    <property type="project" value="UniProtKB-KW"/>
</dbReference>
<dbReference type="InterPro" id="IPR000714">
    <property type="entry name" value="EHV_Unk"/>
</dbReference>
<dbReference type="Pfam" id="PF02053">
    <property type="entry name" value="Gene66"/>
    <property type="match status" value="1"/>
</dbReference>
<dbReference type="PRINTS" id="PR00957">
    <property type="entry name" value="GENE66"/>
</dbReference>
<evidence type="ECO:0000250" key="1"/>
<evidence type="ECO:0000255" key="2"/>
<evidence type="ECO:0000256" key="3">
    <source>
        <dbReference type="SAM" id="MobiDB-lite"/>
    </source>
</evidence>
<evidence type="ECO:0000305" key="4"/>